<reference key="1">
    <citation type="journal article" date="2007" name="Nat. Biotechnol.">
        <title>Genome sequencing and analysis of the versatile cell factory Aspergillus niger CBS 513.88.</title>
        <authorList>
            <person name="Pel H.J."/>
            <person name="de Winde J.H."/>
            <person name="Archer D.B."/>
            <person name="Dyer P.S."/>
            <person name="Hofmann G."/>
            <person name="Schaap P.J."/>
            <person name="Turner G."/>
            <person name="de Vries R.P."/>
            <person name="Albang R."/>
            <person name="Albermann K."/>
            <person name="Andersen M.R."/>
            <person name="Bendtsen J.D."/>
            <person name="Benen J.A.E."/>
            <person name="van den Berg M."/>
            <person name="Breestraat S."/>
            <person name="Caddick M.X."/>
            <person name="Contreras R."/>
            <person name="Cornell M."/>
            <person name="Coutinho P.M."/>
            <person name="Danchin E.G.J."/>
            <person name="Debets A.J.M."/>
            <person name="Dekker P."/>
            <person name="van Dijck P.W.M."/>
            <person name="van Dijk A."/>
            <person name="Dijkhuizen L."/>
            <person name="Driessen A.J.M."/>
            <person name="d'Enfert C."/>
            <person name="Geysens S."/>
            <person name="Goosen C."/>
            <person name="Groot G.S.P."/>
            <person name="de Groot P.W.J."/>
            <person name="Guillemette T."/>
            <person name="Henrissat B."/>
            <person name="Herweijer M."/>
            <person name="van den Hombergh J.P.T.W."/>
            <person name="van den Hondel C.A.M.J.J."/>
            <person name="van der Heijden R.T.J.M."/>
            <person name="van der Kaaij R.M."/>
            <person name="Klis F.M."/>
            <person name="Kools H.J."/>
            <person name="Kubicek C.P."/>
            <person name="van Kuyk P.A."/>
            <person name="Lauber J."/>
            <person name="Lu X."/>
            <person name="van der Maarel M.J.E.C."/>
            <person name="Meulenberg R."/>
            <person name="Menke H."/>
            <person name="Mortimer M.A."/>
            <person name="Nielsen J."/>
            <person name="Oliver S.G."/>
            <person name="Olsthoorn M."/>
            <person name="Pal K."/>
            <person name="van Peij N.N.M.E."/>
            <person name="Ram A.F.J."/>
            <person name="Rinas U."/>
            <person name="Roubos J.A."/>
            <person name="Sagt C.M.J."/>
            <person name="Schmoll M."/>
            <person name="Sun J."/>
            <person name="Ussery D."/>
            <person name="Varga J."/>
            <person name="Vervecken W."/>
            <person name="van de Vondervoort P.J.J."/>
            <person name="Wedler H."/>
            <person name="Woesten H.A.B."/>
            <person name="Zeng A.-P."/>
            <person name="van Ooyen A.J.J."/>
            <person name="Visser J."/>
            <person name="Stam H."/>
        </authorList>
    </citation>
    <scope>NUCLEOTIDE SEQUENCE [LARGE SCALE GENOMIC DNA]</scope>
    <source>
        <strain>ATCC MYA-4892 / CBS 513.88 / FGSC A1513</strain>
    </source>
</reference>
<sequence>MNQNGTRLCYSVREVPPTSFVSAPANYKRASSHCTYTIPAASALTVLYYPFFTAQDRCKICILITIAILATLPWDSYLIRSAIWTYPPDAVVGLKILDIPIEEVFFFAIQTYITSLTYCIFTKPLVRPMYLRSHLERRGTRYVVATVILALMGGGTACLLLGRRMTYLGLILVWACPILLFQWMMSYPFLSELPWKPTITSICLPTLHLWFADSRAMGTGTWRIEEGTKLNFRIGGLELEEALFFLVSNMMVVLGLVGCDYAYALQEYESLSQPASDVYITLRKALSLLARPLPIDASLISALSQAVYRLQEKSQSMFLGSALFQGQLRIDLIFLYSFCRVMDDLIDEAEDEQEARFWVTECRHLLDSTHRSEPHSDHFYTGKKGEEHERLRQSISYLPPSHLSNDSFDDLLKGFEIDLKFNPQREAFPIQSEYCLDQYAGFVAGTVGVLVFDLTLFHCGHYFIQDVPRLRRAAKDMGKAMQCQPRGDGGATSGRKRAIAGNRGELYGYWTTAEGAERHKPGASVEDEGAFGATAKSWLAGDVITELCHCFIQAEYVIYLVRHQNASADTLVLLSALVYRLE</sequence>
<accession>A2QM49</accession>
<keyword id="KW-0125">Carotenoid biosynthesis</keyword>
<keyword id="KW-0413">Isomerase</keyword>
<keyword id="KW-0472">Membrane</keyword>
<keyword id="KW-0511">Multifunctional enzyme</keyword>
<keyword id="KW-1185">Reference proteome</keyword>
<keyword id="KW-0808">Transferase</keyword>
<keyword id="KW-0812">Transmembrane</keyword>
<keyword id="KW-1133">Transmembrane helix</keyword>
<comment type="function">
    <text evidence="1">Bifunctional enzyme that catalyzes the reactions from geranylgeranyl diphosphate to phytoene (phytoene synthase) and lycopene to beta-carotene via the intermediate gamma-carotene (lycopene cyclase).</text>
</comment>
<comment type="catalytic activity">
    <reaction evidence="1">
        <text>all-trans-lycopene = gamma-carotene</text>
        <dbReference type="Rhea" id="RHEA:32219"/>
        <dbReference type="ChEBI" id="CHEBI:15948"/>
        <dbReference type="ChEBI" id="CHEBI:27740"/>
        <dbReference type="EC" id="5.5.1.19"/>
    </reaction>
</comment>
<comment type="catalytic activity">
    <reaction evidence="1">
        <text>gamma-carotene = all-trans-beta-carotene</text>
        <dbReference type="Rhea" id="RHEA:32239"/>
        <dbReference type="ChEBI" id="CHEBI:17579"/>
        <dbReference type="ChEBI" id="CHEBI:27740"/>
        <dbReference type="EC" id="5.5.1.19"/>
    </reaction>
</comment>
<comment type="catalytic activity">
    <reaction evidence="1">
        <text>2 (2E,6E,10E)-geranylgeranyl diphosphate = 15-cis-phytoene + 2 diphosphate</text>
        <dbReference type="Rhea" id="RHEA:34475"/>
        <dbReference type="ChEBI" id="CHEBI:27787"/>
        <dbReference type="ChEBI" id="CHEBI:33019"/>
        <dbReference type="ChEBI" id="CHEBI:58756"/>
        <dbReference type="EC" id="2.5.1.32"/>
    </reaction>
</comment>
<comment type="pathway">
    <text evidence="1">Carotenoid biosynthesis; beta-carotene biosynthesis.</text>
</comment>
<comment type="pathway">
    <text evidence="1">Carotenoid biosynthesis; phytoene biosynthesis; all-trans-phytoene from geranylgeranyl diphosphate: step 1/1.</text>
</comment>
<comment type="subcellular location">
    <subcellularLocation>
        <location evidence="3">Membrane</location>
        <topology evidence="3">Multi-pass membrane protein</topology>
    </subcellularLocation>
</comment>
<comment type="similarity">
    <text evidence="3">In the N-terminal section; belongs to the lycopene beta-cyclase family.</text>
</comment>
<comment type="similarity">
    <text evidence="3">In the C-terminal section; belongs to the phytoene/squalene synthase family.</text>
</comment>
<dbReference type="EC" id="5.5.1.19" evidence="1"/>
<dbReference type="EC" id="2.5.1.32" evidence="1"/>
<dbReference type="EMBL" id="AM270119">
    <property type="protein sequence ID" value="CAK39303.1"/>
    <property type="molecule type" value="Genomic_DNA"/>
</dbReference>
<dbReference type="EnsemblFungi" id="CAK39303">
    <property type="protein sequence ID" value="CAK39303"/>
    <property type="gene ID" value="An07g00800"/>
</dbReference>
<dbReference type="VEuPathDB" id="FungiDB:An07g00800"/>
<dbReference type="HOGENOM" id="CLU_012965_0_0_1"/>
<dbReference type="UniPathway" id="UPA00799">
    <property type="reaction ID" value="UER00773"/>
</dbReference>
<dbReference type="UniPathway" id="UPA00802"/>
<dbReference type="Proteomes" id="UP000006706">
    <property type="component" value="Chromosome 4L"/>
</dbReference>
<dbReference type="GO" id="GO:0016020">
    <property type="term" value="C:membrane"/>
    <property type="evidence" value="ECO:0007669"/>
    <property type="project" value="UniProtKB-SubCell"/>
</dbReference>
<dbReference type="GO" id="GO:0016872">
    <property type="term" value="F:intramolecular lyase activity"/>
    <property type="evidence" value="ECO:0007669"/>
    <property type="project" value="InterPro"/>
</dbReference>
<dbReference type="GO" id="GO:0045436">
    <property type="term" value="F:lycopene beta cyclase activity"/>
    <property type="evidence" value="ECO:0007669"/>
    <property type="project" value="RHEA"/>
</dbReference>
<dbReference type="GO" id="GO:0016740">
    <property type="term" value="F:transferase activity"/>
    <property type="evidence" value="ECO:0007669"/>
    <property type="project" value="UniProtKB-KW"/>
</dbReference>
<dbReference type="GO" id="GO:0016117">
    <property type="term" value="P:carotenoid biosynthetic process"/>
    <property type="evidence" value="ECO:0007669"/>
    <property type="project" value="UniProtKB-KW"/>
</dbReference>
<dbReference type="Gene3D" id="1.10.600.10">
    <property type="entry name" value="Farnesyl Diphosphate Synthase"/>
    <property type="match status" value="1"/>
</dbReference>
<dbReference type="InterPro" id="IPR008949">
    <property type="entry name" value="Isoprenoid_synthase_dom_sf"/>
</dbReference>
<dbReference type="InterPro" id="IPR017825">
    <property type="entry name" value="Lycopene_cyclase_dom"/>
</dbReference>
<dbReference type="InterPro" id="IPR002060">
    <property type="entry name" value="Squ/phyt_synthse"/>
</dbReference>
<dbReference type="NCBIfam" id="TIGR03462">
    <property type="entry name" value="CarR_dom_SF"/>
    <property type="match status" value="2"/>
</dbReference>
<dbReference type="PANTHER" id="PTHR31480">
    <property type="entry name" value="BIFUNCTIONAL LYCOPENE CYCLASE/PHYTOENE SYNTHASE"/>
    <property type="match status" value="1"/>
</dbReference>
<dbReference type="Pfam" id="PF00494">
    <property type="entry name" value="SQS_PSY"/>
    <property type="match status" value="1"/>
</dbReference>
<dbReference type="SUPFAM" id="SSF48576">
    <property type="entry name" value="Terpenoid synthases"/>
    <property type="match status" value="1"/>
</dbReference>
<evidence type="ECO:0000250" key="1">
    <source>
        <dbReference type="UniProtKB" id="P37295"/>
    </source>
</evidence>
<evidence type="ECO:0000255" key="2"/>
<evidence type="ECO:0000305" key="3"/>
<name>LCPS_ASPNC</name>
<gene>
    <name type="ORF">An07g00800</name>
</gene>
<proteinExistence type="inferred from homology"/>
<organism>
    <name type="scientific">Aspergillus niger (strain ATCC MYA-4892 / CBS 513.88 / FGSC A1513)</name>
    <dbReference type="NCBI Taxonomy" id="425011"/>
    <lineage>
        <taxon>Eukaryota</taxon>
        <taxon>Fungi</taxon>
        <taxon>Dikarya</taxon>
        <taxon>Ascomycota</taxon>
        <taxon>Pezizomycotina</taxon>
        <taxon>Eurotiomycetes</taxon>
        <taxon>Eurotiomycetidae</taxon>
        <taxon>Eurotiales</taxon>
        <taxon>Aspergillaceae</taxon>
        <taxon>Aspergillus</taxon>
        <taxon>Aspergillus subgen. Circumdati</taxon>
    </lineage>
</organism>
<protein>
    <recommendedName>
        <fullName evidence="1">Bifunctional lycopene cyclase/phytoene synthase</fullName>
    </recommendedName>
    <domain>
        <recommendedName>
            <fullName evidence="1">Lycopene beta-cyclase</fullName>
            <ecNumber evidence="1">5.5.1.19</ecNumber>
        </recommendedName>
        <alternativeName>
            <fullName evidence="1">Lycopene cyclase</fullName>
        </alternativeName>
    </domain>
    <domain>
        <recommendedName>
            <fullName evidence="1">Phytoene synthase</fullName>
            <ecNumber evidence="1">2.5.1.32</ecNumber>
        </recommendedName>
    </domain>
</protein>
<feature type="chain" id="PRO_0000409232" description="Bifunctional lycopene cyclase/phytoene synthase">
    <location>
        <begin position="1"/>
        <end position="582"/>
    </location>
</feature>
<feature type="transmembrane region" description="Helical" evidence="2">
    <location>
        <begin position="34"/>
        <end position="54"/>
    </location>
</feature>
<feature type="transmembrane region" description="Helical" evidence="2">
    <location>
        <begin position="59"/>
        <end position="79"/>
    </location>
</feature>
<feature type="transmembrane region" description="Helical" evidence="2">
    <location>
        <begin position="99"/>
        <end position="121"/>
    </location>
</feature>
<feature type="transmembrane region" description="Helical" evidence="2">
    <location>
        <begin position="142"/>
        <end position="162"/>
    </location>
</feature>
<feature type="transmembrane region" description="Helical" evidence="2">
    <location>
        <begin position="170"/>
        <end position="190"/>
    </location>
</feature>
<feature type="transmembrane region" description="Helical" evidence="2">
    <location>
        <begin position="242"/>
        <end position="262"/>
    </location>
</feature>
<feature type="region of interest" description="Lycopene beta-cyclase" evidence="1">
    <location>
        <begin position="1"/>
        <end position="261"/>
    </location>
</feature>
<feature type="region of interest" description="Phytoene synthase" evidence="1">
    <location>
        <begin position="268"/>
        <end position="582"/>
    </location>
</feature>